<feature type="chain" id="PRO_0000126280" description="Large ribosomal subunit protein bL36">
    <location>
        <begin position="1"/>
        <end position="37"/>
    </location>
</feature>
<dbReference type="EMBL" id="BX569694">
    <property type="protein sequence ID" value="CAE08602.1"/>
    <property type="molecule type" value="Genomic_DNA"/>
</dbReference>
<dbReference type="RefSeq" id="WP_006173336.1">
    <property type="nucleotide sequence ID" value="NC_005070.1"/>
</dbReference>
<dbReference type="SMR" id="Q7U4I0"/>
<dbReference type="STRING" id="84588.SYNW2087"/>
<dbReference type="KEGG" id="syw:SYNW2087"/>
<dbReference type="eggNOG" id="COG0257">
    <property type="taxonomic scope" value="Bacteria"/>
</dbReference>
<dbReference type="HOGENOM" id="CLU_135723_6_2_3"/>
<dbReference type="Proteomes" id="UP000001422">
    <property type="component" value="Chromosome"/>
</dbReference>
<dbReference type="GO" id="GO:0005737">
    <property type="term" value="C:cytoplasm"/>
    <property type="evidence" value="ECO:0007669"/>
    <property type="project" value="UniProtKB-ARBA"/>
</dbReference>
<dbReference type="GO" id="GO:1990904">
    <property type="term" value="C:ribonucleoprotein complex"/>
    <property type="evidence" value="ECO:0007669"/>
    <property type="project" value="UniProtKB-KW"/>
</dbReference>
<dbReference type="GO" id="GO:0005840">
    <property type="term" value="C:ribosome"/>
    <property type="evidence" value="ECO:0007669"/>
    <property type="project" value="UniProtKB-KW"/>
</dbReference>
<dbReference type="GO" id="GO:0003735">
    <property type="term" value="F:structural constituent of ribosome"/>
    <property type="evidence" value="ECO:0007669"/>
    <property type="project" value="InterPro"/>
</dbReference>
<dbReference type="GO" id="GO:0006412">
    <property type="term" value="P:translation"/>
    <property type="evidence" value="ECO:0007669"/>
    <property type="project" value="UniProtKB-UniRule"/>
</dbReference>
<dbReference type="HAMAP" id="MF_00251">
    <property type="entry name" value="Ribosomal_bL36"/>
    <property type="match status" value="1"/>
</dbReference>
<dbReference type="InterPro" id="IPR000473">
    <property type="entry name" value="Ribosomal_bL36"/>
</dbReference>
<dbReference type="InterPro" id="IPR035977">
    <property type="entry name" value="Ribosomal_bL36_sp"/>
</dbReference>
<dbReference type="NCBIfam" id="TIGR01022">
    <property type="entry name" value="rpmJ_bact"/>
    <property type="match status" value="1"/>
</dbReference>
<dbReference type="PANTHER" id="PTHR42888">
    <property type="entry name" value="50S RIBOSOMAL PROTEIN L36, CHLOROPLASTIC"/>
    <property type="match status" value="1"/>
</dbReference>
<dbReference type="PANTHER" id="PTHR42888:SF1">
    <property type="entry name" value="LARGE RIBOSOMAL SUBUNIT PROTEIN BL36C"/>
    <property type="match status" value="1"/>
</dbReference>
<dbReference type="Pfam" id="PF00444">
    <property type="entry name" value="Ribosomal_L36"/>
    <property type="match status" value="1"/>
</dbReference>
<dbReference type="SUPFAM" id="SSF57840">
    <property type="entry name" value="Ribosomal protein L36"/>
    <property type="match status" value="1"/>
</dbReference>
<dbReference type="PROSITE" id="PS00828">
    <property type="entry name" value="RIBOSOMAL_L36"/>
    <property type="match status" value="1"/>
</dbReference>
<gene>
    <name evidence="1" type="primary">rpmJ</name>
    <name type="synonym">rpl36</name>
    <name type="ordered locus">SYNW2087</name>
</gene>
<accession>Q7U4I0</accession>
<evidence type="ECO:0000255" key="1">
    <source>
        <dbReference type="HAMAP-Rule" id="MF_00251"/>
    </source>
</evidence>
<evidence type="ECO:0000305" key="2"/>
<keyword id="KW-0687">Ribonucleoprotein</keyword>
<keyword id="KW-0689">Ribosomal protein</keyword>
<proteinExistence type="inferred from homology"/>
<comment type="similarity">
    <text evidence="1">Belongs to the bacterial ribosomal protein bL36 family.</text>
</comment>
<name>RL36_PARMW</name>
<protein>
    <recommendedName>
        <fullName evidence="1">Large ribosomal subunit protein bL36</fullName>
    </recommendedName>
    <alternativeName>
        <fullName evidence="2">50S ribosomal protein L36</fullName>
    </alternativeName>
</protein>
<reference key="1">
    <citation type="journal article" date="2003" name="Nature">
        <title>The genome of a motile marine Synechococcus.</title>
        <authorList>
            <person name="Palenik B."/>
            <person name="Brahamsha B."/>
            <person name="Larimer F.W."/>
            <person name="Land M.L."/>
            <person name="Hauser L."/>
            <person name="Chain P."/>
            <person name="Lamerdin J.E."/>
            <person name="Regala W."/>
            <person name="Allen E.E."/>
            <person name="McCarren J."/>
            <person name="Paulsen I.T."/>
            <person name="Dufresne A."/>
            <person name="Partensky F."/>
            <person name="Webb E.A."/>
            <person name="Waterbury J."/>
        </authorList>
    </citation>
    <scope>NUCLEOTIDE SEQUENCE [LARGE SCALE GENOMIC DNA]</scope>
    <source>
        <strain>WH8102</strain>
    </source>
</reference>
<organism>
    <name type="scientific">Parasynechococcus marenigrum (strain WH8102)</name>
    <dbReference type="NCBI Taxonomy" id="84588"/>
    <lineage>
        <taxon>Bacteria</taxon>
        <taxon>Bacillati</taxon>
        <taxon>Cyanobacteriota</taxon>
        <taxon>Cyanophyceae</taxon>
        <taxon>Synechococcales</taxon>
        <taxon>Prochlorococcaceae</taxon>
        <taxon>Parasynechococcus</taxon>
        <taxon>Parasynechococcus marenigrum</taxon>
    </lineage>
</organism>
<sequence>MKVRASVKKMCDKCRVIRRHGRVMVICTNPKHKQRQG</sequence>